<proteinExistence type="inferred from homology"/>
<feature type="chain" id="PRO_1000024469" description="UPF0473 protein CLI_2624">
    <location>
        <begin position="1"/>
        <end position="84"/>
    </location>
</feature>
<sequence length="84" mass="9654">MDNNVDTITLTDEEGKETEFEVITKLDIEDKEYVVVVPKNEEVDEAIALRIDNNDNGEEVLVPVEEDEEFNMVAEAYELLFSEE</sequence>
<evidence type="ECO:0000255" key="1">
    <source>
        <dbReference type="HAMAP-Rule" id="MF_01448"/>
    </source>
</evidence>
<name>Y2624_CLOBL</name>
<protein>
    <recommendedName>
        <fullName evidence="1">UPF0473 protein CLI_2624</fullName>
    </recommendedName>
</protein>
<organism>
    <name type="scientific">Clostridium botulinum (strain Langeland / NCTC 10281 / Type F)</name>
    <dbReference type="NCBI Taxonomy" id="441772"/>
    <lineage>
        <taxon>Bacteria</taxon>
        <taxon>Bacillati</taxon>
        <taxon>Bacillota</taxon>
        <taxon>Clostridia</taxon>
        <taxon>Eubacteriales</taxon>
        <taxon>Clostridiaceae</taxon>
        <taxon>Clostridium</taxon>
    </lineage>
</organism>
<reference key="1">
    <citation type="submission" date="2007-06" db="EMBL/GenBank/DDBJ databases">
        <authorList>
            <person name="Brinkac L.M."/>
            <person name="Daugherty S."/>
            <person name="Dodson R.J."/>
            <person name="Madupu R."/>
            <person name="Brown J.L."/>
            <person name="Bruce D."/>
            <person name="Detter C."/>
            <person name="Munk C."/>
            <person name="Smith L.A."/>
            <person name="Smith T.J."/>
            <person name="White O."/>
            <person name="Brettin T.S."/>
        </authorList>
    </citation>
    <scope>NUCLEOTIDE SEQUENCE [LARGE SCALE GENOMIC DNA]</scope>
    <source>
        <strain>Langeland / NCTC 10281 / Type F</strain>
    </source>
</reference>
<accession>A7GGE8</accession>
<gene>
    <name type="ordered locus">CLI_2624</name>
</gene>
<dbReference type="EMBL" id="CP000728">
    <property type="protein sequence ID" value="ABS40521.1"/>
    <property type="molecule type" value="Genomic_DNA"/>
</dbReference>
<dbReference type="RefSeq" id="WP_011986884.1">
    <property type="nucleotide sequence ID" value="NC_009699.1"/>
</dbReference>
<dbReference type="SMR" id="A7GGE8"/>
<dbReference type="KEGG" id="cbf:CLI_2624"/>
<dbReference type="HOGENOM" id="CLU_146610_8_0_9"/>
<dbReference type="Proteomes" id="UP000002410">
    <property type="component" value="Chromosome"/>
</dbReference>
<dbReference type="HAMAP" id="MF_01448">
    <property type="entry name" value="UPF0473"/>
    <property type="match status" value="1"/>
</dbReference>
<dbReference type="InterPro" id="IPR009711">
    <property type="entry name" value="UPF0473"/>
</dbReference>
<dbReference type="PANTHER" id="PTHR40066">
    <property type="entry name" value="UPF0473 PROTEIN CBO2561/CLC_2432"/>
    <property type="match status" value="1"/>
</dbReference>
<dbReference type="PANTHER" id="PTHR40066:SF1">
    <property type="entry name" value="UPF0473 PROTEIN CBO2561_CLC_2432"/>
    <property type="match status" value="1"/>
</dbReference>
<dbReference type="Pfam" id="PF06949">
    <property type="entry name" value="DUF1292"/>
    <property type="match status" value="1"/>
</dbReference>
<comment type="similarity">
    <text evidence="1">Belongs to the UPF0473 family.</text>
</comment>